<protein>
    <recommendedName>
        <fullName evidence="1">Thiazole synthase</fullName>
        <ecNumber evidence="1">2.8.1.10</ecNumber>
    </recommendedName>
</protein>
<dbReference type="EC" id="2.8.1.10" evidence="1"/>
<dbReference type="EMBL" id="BX640421">
    <property type="protein sequence ID" value="CAE43856.1"/>
    <property type="molecule type" value="Genomic_DNA"/>
</dbReference>
<dbReference type="RefSeq" id="NP_882109.1">
    <property type="nucleotide sequence ID" value="NC_002929.2"/>
</dbReference>
<dbReference type="RefSeq" id="WP_010931559.1">
    <property type="nucleotide sequence ID" value="NZ_CP039022.1"/>
</dbReference>
<dbReference type="SMR" id="Q7VTE5"/>
<dbReference type="STRING" id="257313.BP3597"/>
<dbReference type="PaxDb" id="257313-BP3597"/>
<dbReference type="KEGG" id="bpe:BP3597"/>
<dbReference type="PATRIC" id="fig|257313.5.peg.3893"/>
<dbReference type="eggNOG" id="COG2022">
    <property type="taxonomic scope" value="Bacteria"/>
</dbReference>
<dbReference type="HOGENOM" id="CLU_062233_1_1_4"/>
<dbReference type="UniPathway" id="UPA00060"/>
<dbReference type="Proteomes" id="UP000002676">
    <property type="component" value="Chromosome"/>
</dbReference>
<dbReference type="GO" id="GO:0005737">
    <property type="term" value="C:cytoplasm"/>
    <property type="evidence" value="ECO:0007669"/>
    <property type="project" value="UniProtKB-SubCell"/>
</dbReference>
<dbReference type="GO" id="GO:1990107">
    <property type="term" value="F:thiazole synthase activity"/>
    <property type="evidence" value="ECO:0007669"/>
    <property type="project" value="UniProtKB-EC"/>
</dbReference>
<dbReference type="GO" id="GO:0009229">
    <property type="term" value="P:thiamine diphosphate biosynthetic process"/>
    <property type="evidence" value="ECO:0007669"/>
    <property type="project" value="UniProtKB-UniRule"/>
</dbReference>
<dbReference type="CDD" id="cd04728">
    <property type="entry name" value="ThiG"/>
    <property type="match status" value="1"/>
</dbReference>
<dbReference type="Gene3D" id="3.20.20.70">
    <property type="entry name" value="Aldolase class I"/>
    <property type="match status" value="1"/>
</dbReference>
<dbReference type="HAMAP" id="MF_00443">
    <property type="entry name" value="ThiG"/>
    <property type="match status" value="1"/>
</dbReference>
<dbReference type="InterPro" id="IPR013785">
    <property type="entry name" value="Aldolase_TIM"/>
</dbReference>
<dbReference type="InterPro" id="IPR033983">
    <property type="entry name" value="Thiazole_synthase_ThiG"/>
</dbReference>
<dbReference type="InterPro" id="IPR008867">
    <property type="entry name" value="ThiG"/>
</dbReference>
<dbReference type="PANTHER" id="PTHR34266">
    <property type="entry name" value="THIAZOLE SYNTHASE"/>
    <property type="match status" value="1"/>
</dbReference>
<dbReference type="PANTHER" id="PTHR34266:SF2">
    <property type="entry name" value="THIAZOLE SYNTHASE"/>
    <property type="match status" value="1"/>
</dbReference>
<dbReference type="Pfam" id="PF05690">
    <property type="entry name" value="ThiG"/>
    <property type="match status" value="1"/>
</dbReference>
<dbReference type="SUPFAM" id="SSF110399">
    <property type="entry name" value="ThiG-like"/>
    <property type="match status" value="1"/>
</dbReference>
<accession>Q7VTE5</accession>
<evidence type="ECO:0000255" key="1">
    <source>
        <dbReference type="HAMAP-Rule" id="MF_00443"/>
    </source>
</evidence>
<comment type="function">
    <text evidence="1">Catalyzes the rearrangement of 1-deoxy-D-xylulose 5-phosphate (DXP) to produce the thiazole phosphate moiety of thiamine. Sulfur is provided by the thiocarboxylate moiety of the carrier protein ThiS. In vitro, sulfur can be provided by H(2)S.</text>
</comment>
<comment type="catalytic activity">
    <reaction evidence="1">
        <text>[ThiS sulfur-carrier protein]-C-terminal-Gly-aminoethanethioate + 2-iminoacetate + 1-deoxy-D-xylulose 5-phosphate = [ThiS sulfur-carrier protein]-C-terminal Gly-Gly + 2-[(2R,5Z)-2-carboxy-4-methylthiazol-5(2H)-ylidene]ethyl phosphate + 2 H2O + H(+)</text>
        <dbReference type="Rhea" id="RHEA:26297"/>
        <dbReference type="Rhea" id="RHEA-COMP:12909"/>
        <dbReference type="Rhea" id="RHEA-COMP:19908"/>
        <dbReference type="ChEBI" id="CHEBI:15377"/>
        <dbReference type="ChEBI" id="CHEBI:15378"/>
        <dbReference type="ChEBI" id="CHEBI:57792"/>
        <dbReference type="ChEBI" id="CHEBI:62899"/>
        <dbReference type="ChEBI" id="CHEBI:77846"/>
        <dbReference type="ChEBI" id="CHEBI:90778"/>
        <dbReference type="ChEBI" id="CHEBI:232372"/>
        <dbReference type="EC" id="2.8.1.10"/>
    </reaction>
</comment>
<comment type="pathway">
    <text evidence="1">Cofactor biosynthesis; thiamine diphosphate biosynthesis.</text>
</comment>
<comment type="subunit">
    <text evidence="1">Homotetramer. Forms heterodimers with either ThiH or ThiS.</text>
</comment>
<comment type="subcellular location">
    <subcellularLocation>
        <location evidence="1">Cytoplasm</location>
    </subcellularLocation>
</comment>
<comment type="similarity">
    <text evidence="1">Belongs to the ThiG family.</text>
</comment>
<reference key="1">
    <citation type="journal article" date="2003" name="Nat. Genet.">
        <title>Comparative analysis of the genome sequences of Bordetella pertussis, Bordetella parapertussis and Bordetella bronchiseptica.</title>
        <authorList>
            <person name="Parkhill J."/>
            <person name="Sebaihia M."/>
            <person name="Preston A."/>
            <person name="Murphy L.D."/>
            <person name="Thomson N.R."/>
            <person name="Harris D.E."/>
            <person name="Holden M.T.G."/>
            <person name="Churcher C.M."/>
            <person name="Bentley S.D."/>
            <person name="Mungall K.L."/>
            <person name="Cerdeno-Tarraga A.-M."/>
            <person name="Temple L."/>
            <person name="James K.D."/>
            <person name="Harris B."/>
            <person name="Quail M.A."/>
            <person name="Achtman M."/>
            <person name="Atkin R."/>
            <person name="Baker S."/>
            <person name="Basham D."/>
            <person name="Bason N."/>
            <person name="Cherevach I."/>
            <person name="Chillingworth T."/>
            <person name="Collins M."/>
            <person name="Cronin A."/>
            <person name="Davis P."/>
            <person name="Doggett J."/>
            <person name="Feltwell T."/>
            <person name="Goble A."/>
            <person name="Hamlin N."/>
            <person name="Hauser H."/>
            <person name="Holroyd S."/>
            <person name="Jagels K."/>
            <person name="Leather S."/>
            <person name="Moule S."/>
            <person name="Norberczak H."/>
            <person name="O'Neil S."/>
            <person name="Ormond D."/>
            <person name="Price C."/>
            <person name="Rabbinowitsch E."/>
            <person name="Rutter S."/>
            <person name="Sanders M."/>
            <person name="Saunders D."/>
            <person name="Seeger K."/>
            <person name="Sharp S."/>
            <person name="Simmonds M."/>
            <person name="Skelton J."/>
            <person name="Squares R."/>
            <person name="Squares S."/>
            <person name="Stevens K."/>
            <person name="Unwin L."/>
            <person name="Whitehead S."/>
            <person name="Barrell B.G."/>
            <person name="Maskell D.J."/>
        </authorList>
    </citation>
    <scope>NUCLEOTIDE SEQUENCE [LARGE SCALE GENOMIC DNA]</scope>
    <source>
        <strain>Tohama I / ATCC BAA-589 / NCTC 13251</strain>
    </source>
</reference>
<organism>
    <name type="scientific">Bordetella pertussis (strain Tohama I / ATCC BAA-589 / NCTC 13251)</name>
    <dbReference type="NCBI Taxonomy" id="257313"/>
    <lineage>
        <taxon>Bacteria</taxon>
        <taxon>Pseudomonadati</taxon>
        <taxon>Pseudomonadota</taxon>
        <taxon>Betaproteobacteria</taxon>
        <taxon>Burkholderiales</taxon>
        <taxon>Alcaligenaceae</taxon>
        <taxon>Bordetella</taxon>
    </lineage>
</organism>
<sequence>MTTEDTLTIAGRSYQSRLLVGTGKYQDFAQTRAALDASGTQIVTVAIRRTNIGQNPDEPSLLDFVPPSQFTLLPNTAGCYSADDAVRTLRLARELLDGHDLVKLEVLGDPQNLFPNMPETLKATKTLVDEGFKVMVYCTDDPIQCRMLEDLGAVAVMPLASLIGSGMGILNPWNLRLIIDQSSVPVLVDAGVGTASDAAIAMELGCDGVLMNTAIAGARDPILMASAMRKAVEGGREAYLAGRVPRKLYSAAPSSPTEGLIAAAK</sequence>
<feature type="chain" id="PRO_0000162794" description="Thiazole synthase">
    <location>
        <begin position="1"/>
        <end position="265"/>
    </location>
</feature>
<feature type="active site" description="Schiff-base intermediate with DXP" evidence="1">
    <location>
        <position position="103"/>
    </location>
</feature>
<feature type="binding site" evidence="1">
    <location>
        <position position="164"/>
    </location>
    <ligand>
        <name>1-deoxy-D-xylulose 5-phosphate</name>
        <dbReference type="ChEBI" id="CHEBI:57792"/>
    </ligand>
</feature>
<feature type="binding site" evidence="1">
    <location>
        <begin position="190"/>
        <end position="191"/>
    </location>
    <ligand>
        <name>1-deoxy-D-xylulose 5-phosphate</name>
        <dbReference type="ChEBI" id="CHEBI:57792"/>
    </ligand>
</feature>
<feature type="binding site" evidence="1">
    <location>
        <begin position="212"/>
        <end position="213"/>
    </location>
    <ligand>
        <name>1-deoxy-D-xylulose 5-phosphate</name>
        <dbReference type="ChEBI" id="CHEBI:57792"/>
    </ligand>
</feature>
<proteinExistence type="inferred from homology"/>
<gene>
    <name evidence="1" type="primary">thiG</name>
    <name type="ordered locus">BP3597</name>
</gene>
<name>THIG_BORPE</name>
<keyword id="KW-0963">Cytoplasm</keyword>
<keyword id="KW-1185">Reference proteome</keyword>
<keyword id="KW-0704">Schiff base</keyword>
<keyword id="KW-0784">Thiamine biosynthesis</keyword>
<keyword id="KW-0808">Transferase</keyword>